<feature type="chain" id="PRO_1000189218" description="Isoleucine--tRNA ligase">
    <location>
        <begin position="1"/>
        <end position="943"/>
    </location>
</feature>
<feature type="short sequence motif" description="'HIGH' region">
    <location>
        <begin position="59"/>
        <end position="69"/>
    </location>
</feature>
<feature type="short sequence motif" description="'KMSKS' region">
    <location>
        <begin position="618"/>
        <end position="622"/>
    </location>
</feature>
<feature type="binding site" evidence="1">
    <location>
        <position position="577"/>
    </location>
    <ligand>
        <name>L-isoleucyl-5'-AMP</name>
        <dbReference type="ChEBI" id="CHEBI:178002"/>
    </ligand>
</feature>
<feature type="binding site" evidence="1">
    <location>
        <position position="621"/>
    </location>
    <ligand>
        <name>ATP</name>
        <dbReference type="ChEBI" id="CHEBI:30616"/>
    </ligand>
</feature>
<feature type="binding site" evidence="1">
    <location>
        <position position="906"/>
    </location>
    <ligand>
        <name>Zn(2+)</name>
        <dbReference type="ChEBI" id="CHEBI:29105"/>
    </ligand>
</feature>
<feature type="binding site" evidence="1">
    <location>
        <position position="909"/>
    </location>
    <ligand>
        <name>Zn(2+)</name>
        <dbReference type="ChEBI" id="CHEBI:29105"/>
    </ligand>
</feature>
<feature type="binding site" evidence="1">
    <location>
        <position position="926"/>
    </location>
    <ligand>
        <name>Zn(2+)</name>
        <dbReference type="ChEBI" id="CHEBI:29105"/>
    </ligand>
</feature>
<feature type="binding site" evidence="1">
    <location>
        <position position="929"/>
    </location>
    <ligand>
        <name>Zn(2+)</name>
        <dbReference type="ChEBI" id="CHEBI:29105"/>
    </ligand>
</feature>
<evidence type="ECO:0000255" key="1">
    <source>
        <dbReference type="HAMAP-Rule" id="MF_02002"/>
    </source>
</evidence>
<gene>
    <name evidence="1" type="primary">ileS</name>
    <name type="ordered locus">Xfasm12_1578</name>
</gene>
<accession>B0U3Q9</accession>
<sequence length="943" mass="105672">MSQDYKTTLHLPATDFPMRGDLPKREPAILERWERDDFYAQLRAHAKGRPLFLLHDGPPYANGQIHLGHAVNKILKDIIIKSKHLDGFDAPYIPGWDCHGLPIEIAIEKKYGKVGVTLDAVQFRQKCREYAAEQIQLQRRDFKRLGVIGDWDAPYKTLDFRFEADEIRALAKIVDKGHLIRGTKPVHWCFDCGSALAEAEIEYTDKTSPMVDVAYPALDPSALAAVFNATLPPDVQLAVPIWTTTPWTLPASLAISVGPTLDYVLVEGPTHSGQRRWLILAEALAAKALARYGIAELLIHGSAKGAAMEQHILAHPFYPDRTIPLLLGNHVSAEDGTGAVHTAPGHGQEDHQVFQQYGLLNRYSAAELNPVDARGVYLSTTPPLGELTLAGLHIWKANPLIVDALRLRGVLLAAAEMHHSYPHCWRHKTPIVFRATPQWFISMEQAALRSAALKAITHVTWYPQWGQARILSMIENRPDWTISRQRTWGVPIPLFVHRHSGAPHPRSAALMRQIADRVEQQGVDIWYSLDQTELLGTEADQYEKITDILDVWFDSGITHEAVLLERGLPKPADLYLEGADQHRGWFQSSLLTGVAMDNAAPYKQCLTHGFTVDQHGRKMSKSLGNGIEPQDIIKTLGADILRLWIASTDYSNEMSLSQEILKRTTDAYRRIRNTTRFLLGNLHGFDPTLHLVPLSDMIALDRWIVHRAFELQQTIKAAYTRYDFAEIIQKILNFCSVDLGSLYLDVTKDRLYTMHENAPGRRSAQTAMYHLTAAFVRWIAPILSFTADELWSYLPGDHADNVLFTTWYDGLAPLPPNAPLTAADFDKLLTLRDHVTKVLEPMRANGVIGAALEAEITVAADADTAARWQPLTEELRFLFITGDVTVTPANTDGFFVSAQATTKAKCARCWHYRADIGAHPTHPELCGRCITNVDGPGEQRHWF</sequence>
<comment type="function">
    <text evidence="1">Catalyzes the attachment of isoleucine to tRNA(Ile). As IleRS can inadvertently accommodate and process structurally similar amino acids such as valine, to avoid such errors it has two additional distinct tRNA(Ile)-dependent editing activities. One activity is designated as 'pretransfer' editing and involves the hydrolysis of activated Val-AMP. The other activity is designated 'posttransfer' editing and involves deacylation of mischarged Val-tRNA(Ile).</text>
</comment>
<comment type="catalytic activity">
    <reaction evidence="1">
        <text>tRNA(Ile) + L-isoleucine + ATP = L-isoleucyl-tRNA(Ile) + AMP + diphosphate</text>
        <dbReference type="Rhea" id="RHEA:11060"/>
        <dbReference type="Rhea" id="RHEA-COMP:9666"/>
        <dbReference type="Rhea" id="RHEA-COMP:9695"/>
        <dbReference type="ChEBI" id="CHEBI:30616"/>
        <dbReference type="ChEBI" id="CHEBI:33019"/>
        <dbReference type="ChEBI" id="CHEBI:58045"/>
        <dbReference type="ChEBI" id="CHEBI:78442"/>
        <dbReference type="ChEBI" id="CHEBI:78528"/>
        <dbReference type="ChEBI" id="CHEBI:456215"/>
        <dbReference type="EC" id="6.1.1.5"/>
    </reaction>
</comment>
<comment type="cofactor">
    <cofactor evidence="1">
        <name>Zn(2+)</name>
        <dbReference type="ChEBI" id="CHEBI:29105"/>
    </cofactor>
    <text evidence="1">Binds 1 zinc ion per subunit.</text>
</comment>
<comment type="subunit">
    <text evidence="1">Monomer.</text>
</comment>
<comment type="subcellular location">
    <subcellularLocation>
        <location evidence="1">Cytoplasm</location>
    </subcellularLocation>
</comment>
<comment type="domain">
    <text evidence="1">IleRS has two distinct active sites: one for aminoacylation and one for editing. The misactivated valine is translocated from the active site to the editing site, which sterically excludes the correctly activated isoleucine. The single editing site contains two valyl binding pockets, one specific for each substrate (Val-AMP or Val-tRNA(Ile)).</text>
</comment>
<comment type="similarity">
    <text evidence="1">Belongs to the class-I aminoacyl-tRNA synthetase family. IleS type 1 subfamily.</text>
</comment>
<proteinExistence type="inferred from homology"/>
<reference key="1">
    <citation type="journal article" date="2010" name="J. Bacteriol.">
        <title>Whole genome sequences of two Xylella fastidiosa strains (M12 and M23) causing almond leaf scorch disease in California.</title>
        <authorList>
            <person name="Chen J."/>
            <person name="Xie G."/>
            <person name="Han S."/>
            <person name="Chertkov O."/>
            <person name="Sims D."/>
            <person name="Civerolo E.L."/>
        </authorList>
    </citation>
    <scope>NUCLEOTIDE SEQUENCE [LARGE SCALE GENOMIC DNA]</scope>
    <source>
        <strain>M12</strain>
    </source>
</reference>
<dbReference type="EC" id="6.1.1.5" evidence="1"/>
<dbReference type="EMBL" id="CP000941">
    <property type="protein sequence ID" value="ACA12488.1"/>
    <property type="molecule type" value="Genomic_DNA"/>
</dbReference>
<dbReference type="RefSeq" id="WP_012337992.1">
    <property type="nucleotide sequence ID" value="NC_010513.1"/>
</dbReference>
<dbReference type="SMR" id="B0U3Q9"/>
<dbReference type="KEGG" id="xfm:Xfasm12_1578"/>
<dbReference type="HOGENOM" id="CLU_001493_7_1_6"/>
<dbReference type="GO" id="GO:0005829">
    <property type="term" value="C:cytosol"/>
    <property type="evidence" value="ECO:0007669"/>
    <property type="project" value="TreeGrafter"/>
</dbReference>
<dbReference type="GO" id="GO:0002161">
    <property type="term" value="F:aminoacyl-tRNA deacylase activity"/>
    <property type="evidence" value="ECO:0007669"/>
    <property type="project" value="InterPro"/>
</dbReference>
<dbReference type="GO" id="GO:0005524">
    <property type="term" value="F:ATP binding"/>
    <property type="evidence" value="ECO:0007669"/>
    <property type="project" value="UniProtKB-UniRule"/>
</dbReference>
<dbReference type="GO" id="GO:0004822">
    <property type="term" value="F:isoleucine-tRNA ligase activity"/>
    <property type="evidence" value="ECO:0007669"/>
    <property type="project" value="UniProtKB-UniRule"/>
</dbReference>
<dbReference type="GO" id="GO:0000049">
    <property type="term" value="F:tRNA binding"/>
    <property type="evidence" value="ECO:0007669"/>
    <property type="project" value="InterPro"/>
</dbReference>
<dbReference type="GO" id="GO:0008270">
    <property type="term" value="F:zinc ion binding"/>
    <property type="evidence" value="ECO:0007669"/>
    <property type="project" value="UniProtKB-UniRule"/>
</dbReference>
<dbReference type="GO" id="GO:0006428">
    <property type="term" value="P:isoleucyl-tRNA aminoacylation"/>
    <property type="evidence" value="ECO:0007669"/>
    <property type="project" value="UniProtKB-UniRule"/>
</dbReference>
<dbReference type="CDD" id="cd07960">
    <property type="entry name" value="Anticodon_Ia_Ile_BEm"/>
    <property type="match status" value="1"/>
</dbReference>
<dbReference type="FunFam" id="1.10.730.20:FF:000001">
    <property type="entry name" value="Isoleucine--tRNA ligase"/>
    <property type="match status" value="1"/>
</dbReference>
<dbReference type="FunFam" id="3.40.50.620:FF:000042">
    <property type="entry name" value="Isoleucine--tRNA ligase"/>
    <property type="match status" value="1"/>
</dbReference>
<dbReference type="FunFam" id="3.40.50.620:FF:000048">
    <property type="entry name" value="Isoleucine--tRNA ligase"/>
    <property type="match status" value="1"/>
</dbReference>
<dbReference type="FunFam" id="3.90.740.10:FF:000022">
    <property type="entry name" value="Isoleucine--tRNA ligase"/>
    <property type="match status" value="1"/>
</dbReference>
<dbReference type="Gene3D" id="1.10.730.20">
    <property type="match status" value="1"/>
</dbReference>
<dbReference type="Gene3D" id="3.40.50.620">
    <property type="entry name" value="HUPs"/>
    <property type="match status" value="2"/>
</dbReference>
<dbReference type="Gene3D" id="3.90.740.10">
    <property type="entry name" value="Valyl/Leucyl/Isoleucyl-tRNA synthetase, editing domain"/>
    <property type="match status" value="1"/>
</dbReference>
<dbReference type="HAMAP" id="MF_02002">
    <property type="entry name" value="Ile_tRNA_synth_type1"/>
    <property type="match status" value="1"/>
</dbReference>
<dbReference type="InterPro" id="IPR001412">
    <property type="entry name" value="aa-tRNA-synth_I_CS"/>
</dbReference>
<dbReference type="InterPro" id="IPR002300">
    <property type="entry name" value="aa-tRNA-synth_Ia"/>
</dbReference>
<dbReference type="InterPro" id="IPR033708">
    <property type="entry name" value="Anticodon_Ile_BEm"/>
</dbReference>
<dbReference type="InterPro" id="IPR002301">
    <property type="entry name" value="Ile-tRNA-ligase"/>
</dbReference>
<dbReference type="InterPro" id="IPR023585">
    <property type="entry name" value="Ile-tRNA-ligase_type1"/>
</dbReference>
<dbReference type="InterPro" id="IPR050081">
    <property type="entry name" value="Ile-tRNA_ligase"/>
</dbReference>
<dbReference type="InterPro" id="IPR013155">
    <property type="entry name" value="M/V/L/I-tRNA-synth_anticd-bd"/>
</dbReference>
<dbReference type="InterPro" id="IPR014729">
    <property type="entry name" value="Rossmann-like_a/b/a_fold"/>
</dbReference>
<dbReference type="InterPro" id="IPR009080">
    <property type="entry name" value="tRNAsynth_Ia_anticodon-bd"/>
</dbReference>
<dbReference type="InterPro" id="IPR009008">
    <property type="entry name" value="Val/Leu/Ile-tRNA-synth_edit"/>
</dbReference>
<dbReference type="InterPro" id="IPR010663">
    <property type="entry name" value="Znf_FPG/IleRS"/>
</dbReference>
<dbReference type="NCBIfam" id="TIGR00392">
    <property type="entry name" value="ileS"/>
    <property type="match status" value="1"/>
</dbReference>
<dbReference type="PANTHER" id="PTHR42765:SF1">
    <property type="entry name" value="ISOLEUCINE--TRNA LIGASE, MITOCHONDRIAL"/>
    <property type="match status" value="1"/>
</dbReference>
<dbReference type="PANTHER" id="PTHR42765">
    <property type="entry name" value="SOLEUCYL-TRNA SYNTHETASE"/>
    <property type="match status" value="1"/>
</dbReference>
<dbReference type="Pfam" id="PF08264">
    <property type="entry name" value="Anticodon_1"/>
    <property type="match status" value="1"/>
</dbReference>
<dbReference type="Pfam" id="PF00133">
    <property type="entry name" value="tRNA-synt_1"/>
    <property type="match status" value="1"/>
</dbReference>
<dbReference type="Pfam" id="PF06827">
    <property type="entry name" value="zf-FPG_IleRS"/>
    <property type="match status" value="1"/>
</dbReference>
<dbReference type="PRINTS" id="PR00984">
    <property type="entry name" value="TRNASYNTHILE"/>
</dbReference>
<dbReference type="SUPFAM" id="SSF47323">
    <property type="entry name" value="Anticodon-binding domain of a subclass of class I aminoacyl-tRNA synthetases"/>
    <property type="match status" value="1"/>
</dbReference>
<dbReference type="SUPFAM" id="SSF52374">
    <property type="entry name" value="Nucleotidylyl transferase"/>
    <property type="match status" value="1"/>
</dbReference>
<dbReference type="SUPFAM" id="SSF50677">
    <property type="entry name" value="ValRS/IleRS/LeuRS editing domain"/>
    <property type="match status" value="1"/>
</dbReference>
<dbReference type="PROSITE" id="PS00178">
    <property type="entry name" value="AA_TRNA_LIGASE_I"/>
    <property type="match status" value="1"/>
</dbReference>
<name>SYI_XYLFM</name>
<keyword id="KW-0030">Aminoacyl-tRNA synthetase</keyword>
<keyword id="KW-0067">ATP-binding</keyword>
<keyword id="KW-0963">Cytoplasm</keyword>
<keyword id="KW-0436">Ligase</keyword>
<keyword id="KW-0479">Metal-binding</keyword>
<keyword id="KW-0547">Nucleotide-binding</keyword>
<keyword id="KW-0648">Protein biosynthesis</keyword>
<keyword id="KW-0862">Zinc</keyword>
<organism>
    <name type="scientific">Xylella fastidiosa (strain M12)</name>
    <dbReference type="NCBI Taxonomy" id="405440"/>
    <lineage>
        <taxon>Bacteria</taxon>
        <taxon>Pseudomonadati</taxon>
        <taxon>Pseudomonadota</taxon>
        <taxon>Gammaproteobacteria</taxon>
        <taxon>Lysobacterales</taxon>
        <taxon>Lysobacteraceae</taxon>
        <taxon>Xylella</taxon>
    </lineage>
</organism>
<protein>
    <recommendedName>
        <fullName evidence="1">Isoleucine--tRNA ligase</fullName>
        <ecNumber evidence="1">6.1.1.5</ecNumber>
    </recommendedName>
    <alternativeName>
        <fullName evidence="1">Isoleucyl-tRNA synthetase</fullName>
        <shortName evidence="1">IleRS</shortName>
    </alternativeName>
</protein>